<accession>B1I8L3</accession>
<evidence type="ECO:0000255" key="1">
    <source>
        <dbReference type="HAMAP-Rule" id="MF_01365"/>
    </source>
</evidence>
<evidence type="ECO:0000305" key="2"/>
<proteinExistence type="inferred from homology"/>
<keyword id="KW-0687">Ribonucleoprotein</keyword>
<keyword id="KW-0689">Ribosomal protein</keyword>
<keyword id="KW-0694">RNA-binding</keyword>
<keyword id="KW-0699">rRNA-binding</keyword>
<name>RL6_STRPI</name>
<sequence>MSRIGNKVIVLPAGVELANNDNVVTVKGPKGELTREFSKDIEIRVEGTEVTLHRPNDSKEMKTIHGTTRALLNNMVVGVSEGFKKELEMRGVGYRAQLQGSKLVLAVGKSHPDEVEAPEGITFELPNPTTIVVSGISKEVVGQTAAYVRSLRSPEPYKGKGIRYVGEFVRRKEGKTGK</sequence>
<gene>
    <name evidence="1" type="primary">rplF</name>
    <name type="ordered locus">SPH_0338</name>
</gene>
<feature type="chain" id="PRO_1000144056" description="Large ribosomal subunit protein uL6">
    <location>
        <begin position="1"/>
        <end position="178"/>
    </location>
</feature>
<protein>
    <recommendedName>
        <fullName evidence="1">Large ribosomal subunit protein uL6</fullName>
    </recommendedName>
    <alternativeName>
        <fullName evidence="2">50S ribosomal protein L6</fullName>
    </alternativeName>
</protein>
<dbReference type="EMBL" id="CP000936">
    <property type="protein sequence ID" value="ACA35577.1"/>
    <property type="molecule type" value="Genomic_DNA"/>
</dbReference>
<dbReference type="RefSeq" id="WP_000086633.1">
    <property type="nucleotide sequence ID" value="NC_010380.1"/>
</dbReference>
<dbReference type="SMR" id="B1I8L3"/>
<dbReference type="KEGG" id="spv:SPH_0338"/>
<dbReference type="HOGENOM" id="CLU_065464_1_2_9"/>
<dbReference type="Proteomes" id="UP000002163">
    <property type="component" value="Chromosome"/>
</dbReference>
<dbReference type="GO" id="GO:0022625">
    <property type="term" value="C:cytosolic large ribosomal subunit"/>
    <property type="evidence" value="ECO:0007669"/>
    <property type="project" value="TreeGrafter"/>
</dbReference>
<dbReference type="GO" id="GO:0019843">
    <property type="term" value="F:rRNA binding"/>
    <property type="evidence" value="ECO:0007669"/>
    <property type="project" value="UniProtKB-UniRule"/>
</dbReference>
<dbReference type="GO" id="GO:0003735">
    <property type="term" value="F:structural constituent of ribosome"/>
    <property type="evidence" value="ECO:0007669"/>
    <property type="project" value="InterPro"/>
</dbReference>
<dbReference type="GO" id="GO:0002181">
    <property type="term" value="P:cytoplasmic translation"/>
    <property type="evidence" value="ECO:0007669"/>
    <property type="project" value="TreeGrafter"/>
</dbReference>
<dbReference type="FunFam" id="3.90.930.12:FF:000001">
    <property type="entry name" value="50S ribosomal protein L6"/>
    <property type="match status" value="1"/>
</dbReference>
<dbReference type="FunFam" id="3.90.930.12:FF:000002">
    <property type="entry name" value="50S ribosomal protein L6"/>
    <property type="match status" value="1"/>
</dbReference>
<dbReference type="Gene3D" id="3.90.930.12">
    <property type="entry name" value="Ribosomal protein L6, alpha-beta domain"/>
    <property type="match status" value="2"/>
</dbReference>
<dbReference type="HAMAP" id="MF_01365_B">
    <property type="entry name" value="Ribosomal_uL6_B"/>
    <property type="match status" value="1"/>
</dbReference>
<dbReference type="InterPro" id="IPR000702">
    <property type="entry name" value="Ribosomal_uL6-like"/>
</dbReference>
<dbReference type="InterPro" id="IPR036789">
    <property type="entry name" value="Ribosomal_uL6-like_a/b-dom_sf"/>
</dbReference>
<dbReference type="InterPro" id="IPR020040">
    <property type="entry name" value="Ribosomal_uL6_a/b-dom"/>
</dbReference>
<dbReference type="InterPro" id="IPR019906">
    <property type="entry name" value="Ribosomal_uL6_bac-type"/>
</dbReference>
<dbReference type="InterPro" id="IPR002358">
    <property type="entry name" value="Ribosomal_uL6_CS"/>
</dbReference>
<dbReference type="NCBIfam" id="TIGR03654">
    <property type="entry name" value="L6_bact"/>
    <property type="match status" value="1"/>
</dbReference>
<dbReference type="PANTHER" id="PTHR11655">
    <property type="entry name" value="60S/50S RIBOSOMAL PROTEIN L6/L9"/>
    <property type="match status" value="1"/>
</dbReference>
<dbReference type="PANTHER" id="PTHR11655:SF14">
    <property type="entry name" value="LARGE RIBOSOMAL SUBUNIT PROTEIN UL6M"/>
    <property type="match status" value="1"/>
</dbReference>
<dbReference type="Pfam" id="PF00347">
    <property type="entry name" value="Ribosomal_L6"/>
    <property type="match status" value="2"/>
</dbReference>
<dbReference type="PIRSF" id="PIRSF002162">
    <property type="entry name" value="Ribosomal_L6"/>
    <property type="match status" value="1"/>
</dbReference>
<dbReference type="PRINTS" id="PR00059">
    <property type="entry name" value="RIBOSOMALL6"/>
</dbReference>
<dbReference type="SUPFAM" id="SSF56053">
    <property type="entry name" value="Ribosomal protein L6"/>
    <property type="match status" value="2"/>
</dbReference>
<dbReference type="PROSITE" id="PS00525">
    <property type="entry name" value="RIBOSOMAL_L6_1"/>
    <property type="match status" value="1"/>
</dbReference>
<reference key="1">
    <citation type="journal article" date="2010" name="Genome Biol.">
        <title>Structure and dynamics of the pan-genome of Streptococcus pneumoniae and closely related species.</title>
        <authorList>
            <person name="Donati C."/>
            <person name="Hiller N.L."/>
            <person name="Tettelin H."/>
            <person name="Muzzi A."/>
            <person name="Croucher N.J."/>
            <person name="Angiuoli S.V."/>
            <person name="Oggioni M."/>
            <person name="Dunning Hotopp J.C."/>
            <person name="Hu F.Z."/>
            <person name="Riley D.R."/>
            <person name="Covacci A."/>
            <person name="Mitchell T.J."/>
            <person name="Bentley S.D."/>
            <person name="Kilian M."/>
            <person name="Ehrlich G.D."/>
            <person name="Rappuoli R."/>
            <person name="Moxon E.R."/>
            <person name="Masignani V."/>
        </authorList>
    </citation>
    <scope>NUCLEOTIDE SEQUENCE [LARGE SCALE GENOMIC DNA]</scope>
    <source>
        <strain>Hungary19A-6</strain>
    </source>
</reference>
<organism>
    <name type="scientific">Streptococcus pneumoniae (strain Hungary19A-6)</name>
    <dbReference type="NCBI Taxonomy" id="487214"/>
    <lineage>
        <taxon>Bacteria</taxon>
        <taxon>Bacillati</taxon>
        <taxon>Bacillota</taxon>
        <taxon>Bacilli</taxon>
        <taxon>Lactobacillales</taxon>
        <taxon>Streptococcaceae</taxon>
        <taxon>Streptococcus</taxon>
    </lineage>
</organism>
<comment type="function">
    <text evidence="1">This protein binds to the 23S rRNA, and is important in its secondary structure. It is located near the subunit interface in the base of the L7/L12 stalk, and near the tRNA binding site of the peptidyltransferase center.</text>
</comment>
<comment type="subunit">
    <text evidence="1">Part of the 50S ribosomal subunit.</text>
</comment>
<comment type="similarity">
    <text evidence="1">Belongs to the universal ribosomal protein uL6 family.</text>
</comment>